<gene>
    <name evidence="1" type="primary">ispF</name>
    <name type="ordered locus">GAU_1631</name>
</gene>
<reference key="1">
    <citation type="submission" date="2006-03" db="EMBL/GenBank/DDBJ databases">
        <title>Complete genome sequence of Gemmatimonas aurantiaca T-27 that represents a novel phylum Gemmatimonadetes.</title>
        <authorList>
            <person name="Takasaki K."/>
            <person name="Ichikawa N."/>
            <person name="Miura H."/>
            <person name="Matsushita S."/>
            <person name="Watanabe Y."/>
            <person name="Oguchi A."/>
            <person name="Ankai A."/>
            <person name="Yashiro I."/>
            <person name="Takahashi M."/>
            <person name="Terui Y."/>
            <person name="Fukui S."/>
            <person name="Yokoyama H."/>
            <person name="Tanikawa S."/>
            <person name="Hanada S."/>
            <person name="Kamagata Y."/>
            <person name="Fujita N."/>
        </authorList>
    </citation>
    <scope>NUCLEOTIDE SEQUENCE [LARGE SCALE GENOMIC DNA]</scope>
    <source>
        <strain>DSM 14586 / JCM 11422 / NBRC 100505 / T-27</strain>
    </source>
</reference>
<proteinExistence type="inferred from homology"/>
<comment type="function">
    <text evidence="1">Involved in the biosynthesis of isopentenyl diphosphate (IPP) and dimethylallyl diphosphate (DMAPP), two major building blocks of isoprenoid compounds. Catalyzes the conversion of 4-diphosphocytidyl-2-C-methyl-D-erythritol 2-phosphate (CDP-ME2P) to 2-C-methyl-D-erythritol 2,4-cyclodiphosphate (ME-CPP) with a corresponding release of cytidine 5-monophosphate (CMP).</text>
</comment>
<comment type="catalytic activity">
    <reaction evidence="1">
        <text>4-CDP-2-C-methyl-D-erythritol 2-phosphate = 2-C-methyl-D-erythritol 2,4-cyclic diphosphate + CMP</text>
        <dbReference type="Rhea" id="RHEA:23864"/>
        <dbReference type="ChEBI" id="CHEBI:57919"/>
        <dbReference type="ChEBI" id="CHEBI:58483"/>
        <dbReference type="ChEBI" id="CHEBI:60377"/>
        <dbReference type="EC" id="4.6.1.12"/>
    </reaction>
</comment>
<comment type="cofactor">
    <cofactor evidence="1">
        <name>a divalent metal cation</name>
        <dbReference type="ChEBI" id="CHEBI:60240"/>
    </cofactor>
    <text evidence="1">Binds 1 divalent metal cation per subunit.</text>
</comment>
<comment type="pathway">
    <text evidence="1">Isoprenoid biosynthesis; isopentenyl diphosphate biosynthesis via DXP pathway; isopentenyl diphosphate from 1-deoxy-D-xylulose 5-phosphate: step 4/6.</text>
</comment>
<comment type="subunit">
    <text evidence="1">Homotrimer.</text>
</comment>
<comment type="similarity">
    <text evidence="1">Belongs to the IspF family.</text>
</comment>
<feature type="chain" id="PRO_1000202879" description="2-C-methyl-D-erythritol 2,4-cyclodiphosphate synthase">
    <location>
        <begin position="1"/>
        <end position="166"/>
    </location>
</feature>
<feature type="binding site" evidence="1">
    <location>
        <begin position="12"/>
        <end position="14"/>
    </location>
    <ligand>
        <name>4-CDP-2-C-methyl-D-erythritol 2-phosphate</name>
        <dbReference type="ChEBI" id="CHEBI:57919"/>
    </ligand>
</feature>
<feature type="binding site" evidence="1">
    <location>
        <position position="12"/>
    </location>
    <ligand>
        <name>a divalent metal cation</name>
        <dbReference type="ChEBI" id="CHEBI:60240"/>
    </ligand>
</feature>
<feature type="binding site" evidence="1">
    <location>
        <position position="14"/>
    </location>
    <ligand>
        <name>a divalent metal cation</name>
        <dbReference type="ChEBI" id="CHEBI:60240"/>
    </ligand>
</feature>
<feature type="binding site" evidence="1">
    <location>
        <begin position="38"/>
        <end position="39"/>
    </location>
    <ligand>
        <name>4-CDP-2-C-methyl-D-erythritol 2-phosphate</name>
        <dbReference type="ChEBI" id="CHEBI:57919"/>
    </ligand>
</feature>
<feature type="binding site" evidence="1">
    <location>
        <position position="46"/>
    </location>
    <ligand>
        <name>a divalent metal cation</name>
        <dbReference type="ChEBI" id="CHEBI:60240"/>
    </ligand>
</feature>
<feature type="binding site" evidence="1">
    <location>
        <begin position="60"/>
        <end position="62"/>
    </location>
    <ligand>
        <name>4-CDP-2-C-methyl-D-erythritol 2-phosphate</name>
        <dbReference type="ChEBI" id="CHEBI:57919"/>
    </ligand>
</feature>
<feature type="binding site" evidence="1">
    <location>
        <begin position="65"/>
        <end position="69"/>
    </location>
    <ligand>
        <name>4-CDP-2-C-methyl-D-erythritol 2-phosphate</name>
        <dbReference type="ChEBI" id="CHEBI:57919"/>
    </ligand>
</feature>
<feature type="binding site" evidence="1">
    <location>
        <position position="146"/>
    </location>
    <ligand>
        <name>4-CDP-2-C-methyl-D-erythritol 2-phosphate</name>
        <dbReference type="ChEBI" id="CHEBI:57919"/>
    </ligand>
</feature>
<feature type="site" description="Transition state stabilizer" evidence="1">
    <location>
        <position position="38"/>
    </location>
</feature>
<feature type="site" description="Transition state stabilizer" evidence="1">
    <location>
        <position position="137"/>
    </location>
</feature>
<protein>
    <recommendedName>
        <fullName evidence="1">2-C-methyl-D-erythritol 2,4-cyclodiphosphate synthase</fullName>
        <shortName evidence="1">MECDP-synthase</shortName>
        <shortName evidence="1">MECPP-synthase</shortName>
        <shortName evidence="1">MECPS</shortName>
        <ecNumber evidence="1">4.6.1.12</ecNumber>
    </recommendedName>
</protein>
<organism>
    <name type="scientific">Gemmatimonas aurantiaca (strain DSM 14586 / JCM 11422 / NBRC 100505 / T-27)</name>
    <dbReference type="NCBI Taxonomy" id="379066"/>
    <lineage>
        <taxon>Bacteria</taxon>
        <taxon>Pseudomonadati</taxon>
        <taxon>Gemmatimonadota</taxon>
        <taxon>Gemmatimonadia</taxon>
        <taxon>Gemmatimonadales</taxon>
        <taxon>Gemmatimonadaceae</taxon>
        <taxon>Gemmatimonas</taxon>
    </lineage>
</organism>
<keyword id="KW-0414">Isoprene biosynthesis</keyword>
<keyword id="KW-0456">Lyase</keyword>
<keyword id="KW-0479">Metal-binding</keyword>
<keyword id="KW-1185">Reference proteome</keyword>
<sequence>MSLLLRVGIGYDSHRFGEGGPMRLGGIDIPSDRHCAGHSDGDAICHAVTDALLGAAGLGDIGEMFPDTDAANKGKDSVVMLEAAVSRLHAAGWRVGNVDITVITQQPKIGPHRAAMRDRLATVLGVNSTEVFVKGKTNEGLGWIGREEGLGVIATATILAIGSSTL</sequence>
<dbReference type="EC" id="4.6.1.12" evidence="1"/>
<dbReference type="EMBL" id="AP009153">
    <property type="protein sequence ID" value="BAH38673.1"/>
    <property type="molecule type" value="Genomic_DNA"/>
</dbReference>
<dbReference type="RefSeq" id="WP_012683120.1">
    <property type="nucleotide sequence ID" value="NC_012489.1"/>
</dbReference>
<dbReference type="SMR" id="C1A8W3"/>
<dbReference type="STRING" id="379066.GAU_1631"/>
<dbReference type="KEGG" id="gau:GAU_1631"/>
<dbReference type="eggNOG" id="COG0245">
    <property type="taxonomic scope" value="Bacteria"/>
</dbReference>
<dbReference type="HOGENOM" id="CLU_084630_2_0_0"/>
<dbReference type="OrthoDB" id="9804336at2"/>
<dbReference type="UniPathway" id="UPA00056">
    <property type="reaction ID" value="UER00095"/>
</dbReference>
<dbReference type="Proteomes" id="UP000002209">
    <property type="component" value="Chromosome"/>
</dbReference>
<dbReference type="GO" id="GO:0008685">
    <property type="term" value="F:2-C-methyl-D-erythritol 2,4-cyclodiphosphate synthase activity"/>
    <property type="evidence" value="ECO:0007669"/>
    <property type="project" value="UniProtKB-UniRule"/>
</dbReference>
<dbReference type="GO" id="GO:0046872">
    <property type="term" value="F:metal ion binding"/>
    <property type="evidence" value="ECO:0007669"/>
    <property type="project" value="UniProtKB-KW"/>
</dbReference>
<dbReference type="GO" id="GO:0019288">
    <property type="term" value="P:isopentenyl diphosphate biosynthetic process, methylerythritol 4-phosphate pathway"/>
    <property type="evidence" value="ECO:0007669"/>
    <property type="project" value="UniProtKB-UniRule"/>
</dbReference>
<dbReference type="GO" id="GO:0016114">
    <property type="term" value="P:terpenoid biosynthetic process"/>
    <property type="evidence" value="ECO:0007669"/>
    <property type="project" value="InterPro"/>
</dbReference>
<dbReference type="CDD" id="cd00554">
    <property type="entry name" value="MECDP_synthase"/>
    <property type="match status" value="1"/>
</dbReference>
<dbReference type="Gene3D" id="3.30.1330.50">
    <property type="entry name" value="2-C-methyl-D-erythritol 2,4-cyclodiphosphate synthase"/>
    <property type="match status" value="1"/>
</dbReference>
<dbReference type="HAMAP" id="MF_00107">
    <property type="entry name" value="IspF"/>
    <property type="match status" value="1"/>
</dbReference>
<dbReference type="InterPro" id="IPR003526">
    <property type="entry name" value="MECDP_synthase"/>
</dbReference>
<dbReference type="InterPro" id="IPR020555">
    <property type="entry name" value="MECDP_synthase_CS"/>
</dbReference>
<dbReference type="InterPro" id="IPR036571">
    <property type="entry name" value="MECDP_synthase_sf"/>
</dbReference>
<dbReference type="NCBIfam" id="TIGR00151">
    <property type="entry name" value="ispF"/>
    <property type="match status" value="1"/>
</dbReference>
<dbReference type="PANTHER" id="PTHR43181">
    <property type="entry name" value="2-C-METHYL-D-ERYTHRITOL 2,4-CYCLODIPHOSPHATE SYNTHASE, CHLOROPLASTIC"/>
    <property type="match status" value="1"/>
</dbReference>
<dbReference type="PANTHER" id="PTHR43181:SF1">
    <property type="entry name" value="2-C-METHYL-D-ERYTHRITOL 2,4-CYCLODIPHOSPHATE SYNTHASE, CHLOROPLASTIC"/>
    <property type="match status" value="1"/>
</dbReference>
<dbReference type="Pfam" id="PF02542">
    <property type="entry name" value="YgbB"/>
    <property type="match status" value="1"/>
</dbReference>
<dbReference type="SUPFAM" id="SSF69765">
    <property type="entry name" value="IpsF-like"/>
    <property type="match status" value="1"/>
</dbReference>
<dbReference type="PROSITE" id="PS01350">
    <property type="entry name" value="ISPF"/>
    <property type="match status" value="1"/>
</dbReference>
<name>ISPF_GEMAT</name>
<evidence type="ECO:0000255" key="1">
    <source>
        <dbReference type="HAMAP-Rule" id="MF_00107"/>
    </source>
</evidence>
<accession>C1A8W3</accession>